<evidence type="ECO:0000255" key="1">
    <source>
        <dbReference type="HAMAP-Rule" id="MF_00532"/>
    </source>
</evidence>
<evidence type="ECO:0000305" key="2"/>
<organism>
    <name type="scientific">Gemmatimonas aurantiaca (strain DSM 14586 / JCM 11422 / NBRC 100505 / T-27)</name>
    <dbReference type="NCBI Taxonomy" id="379066"/>
    <lineage>
        <taxon>Bacteria</taxon>
        <taxon>Pseudomonadati</taxon>
        <taxon>Gemmatimonadota</taxon>
        <taxon>Gemmatimonadia</taxon>
        <taxon>Gemmatimonadales</taxon>
        <taxon>Gemmatimonadaceae</taxon>
        <taxon>Gemmatimonas</taxon>
    </lineage>
</organism>
<keyword id="KW-1185">Reference proteome</keyword>
<keyword id="KW-0687">Ribonucleoprotein</keyword>
<keyword id="KW-0689">Ribosomal protein</keyword>
<reference key="1">
    <citation type="submission" date="2006-03" db="EMBL/GenBank/DDBJ databases">
        <title>Complete genome sequence of Gemmatimonas aurantiaca T-27 that represents a novel phylum Gemmatimonadetes.</title>
        <authorList>
            <person name="Takasaki K."/>
            <person name="Ichikawa N."/>
            <person name="Miura H."/>
            <person name="Matsushita S."/>
            <person name="Watanabe Y."/>
            <person name="Oguchi A."/>
            <person name="Ankai A."/>
            <person name="Yashiro I."/>
            <person name="Takahashi M."/>
            <person name="Terui Y."/>
            <person name="Fukui S."/>
            <person name="Yokoyama H."/>
            <person name="Tanikawa S."/>
            <person name="Hanada S."/>
            <person name="Kamagata Y."/>
            <person name="Fujita N."/>
        </authorList>
    </citation>
    <scope>NUCLEOTIDE SEQUENCE [LARGE SCALE GENOMIC DNA]</scope>
    <source>
        <strain>DSM 14586 / JCM 11422 / NBRC 100505 / T-27</strain>
    </source>
</reference>
<protein>
    <recommendedName>
        <fullName evidence="1">Small ribosomal subunit protein uS9</fullName>
    </recommendedName>
    <alternativeName>
        <fullName evidence="2">30S ribosomal protein S9</fullName>
    </alternativeName>
</protein>
<dbReference type="EMBL" id="AP009153">
    <property type="protein sequence ID" value="BAH38819.1"/>
    <property type="molecule type" value="Genomic_DNA"/>
</dbReference>
<dbReference type="RefSeq" id="WP_012683266.1">
    <property type="nucleotide sequence ID" value="NC_012489.1"/>
</dbReference>
<dbReference type="SMR" id="C1A3Z4"/>
<dbReference type="STRING" id="379066.GAU_1777"/>
<dbReference type="KEGG" id="gau:GAU_1777"/>
<dbReference type="eggNOG" id="COG0103">
    <property type="taxonomic scope" value="Bacteria"/>
</dbReference>
<dbReference type="HOGENOM" id="CLU_046483_2_1_0"/>
<dbReference type="OrthoDB" id="9803965at2"/>
<dbReference type="Proteomes" id="UP000002209">
    <property type="component" value="Chromosome"/>
</dbReference>
<dbReference type="GO" id="GO:0005737">
    <property type="term" value="C:cytoplasm"/>
    <property type="evidence" value="ECO:0007669"/>
    <property type="project" value="UniProtKB-ARBA"/>
</dbReference>
<dbReference type="GO" id="GO:0015935">
    <property type="term" value="C:small ribosomal subunit"/>
    <property type="evidence" value="ECO:0007669"/>
    <property type="project" value="TreeGrafter"/>
</dbReference>
<dbReference type="GO" id="GO:0003723">
    <property type="term" value="F:RNA binding"/>
    <property type="evidence" value="ECO:0007669"/>
    <property type="project" value="TreeGrafter"/>
</dbReference>
<dbReference type="GO" id="GO:0003735">
    <property type="term" value="F:structural constituent of ribosome"/>
    <property type="evidence" value="ECO:0007669"/>
    <property type="project" value="InterPro"/>
</dbReference>
<dbReference type="GO" id="GO:0006412">
    <property type="term" value="P:translation"/>
    <property type="evidence" value="ECO:0007669"/>
    <property type="project" value="UniProtKB-UniRule"/>
</dbReference>
<dbReference type="FunFam" id="3.30.230.10:FF:000001">
    <property type="entry name" value="30S ribosomal protein S9"/>
    <property type="match status" value="1"/>
</dbReference>
<dbReference type="Gene3D" id="3.30.230.10">
    <property type="match status" value="1"/>
</dbReference>
<dbReference type="HAMAP" id="MF_00532_B">
    <property type="entry name" value="Ribosomal_uS9_B"/>
    <property type="match status" value="1"/>
</dbReference>
<dbReference type="InterPro" id="IPR020568">
    <property type="entry name" value="Ribosomal_Su5_D2-typ_SF"/>
</dbReference>
<dbReference type="InterPro" id="IPR000754">
    <property type="entry name" value="Ribosomal_uS9"/>
</dbReference>
<dbReference type="InterPro" id="IPR023035">
    <property type="entry name" value="Ribosomal_uS9_bac/plastid"/>
</dbReference>
<dbReference type="InterPro" id="IPR020574">
    <property type="entry name" value="Ribosomal_uS9_CS"/>
</dbReference>
<dbReference type="InterPro" id="IPR014721">
    <property type="entry name" value="Ribsml_uS5_D2-typ_fold_subgr"/>
</dbReference>
<dbReference type="NCBIfam" id="NF001099">
    <property type="entry name" value="PRK00132.1"/>
    <property type="match status" value="1"/>
</dbReference>
<dbReference type="PANTHER" id="PTHR21569">
    <property type="entry name" value="RIBOSOMAL PROTEIN S9"/>
    <property type="match status" value="1"/>
</dbReference>
<dbReference type="PANTHER" id="PTHR21569:SF1">
    <property type="entry name" value="SMALL RIBOSOMAL SUBUNIT PROTEIN US9M"/>
    <property type="match status" value="1"/>
</dbReference>
<dbReference type="Pfam" id="PF00380">
    <property type="entry name" value="Ribosomal_S9"/>
    <property type="match status" value="1"/>
</dbReference>
<dbReference type="SUPFAM" id="SSF54211">
    <property type="entry name" value="Ribosomal protein S5 domain 2-like"/>
    <property type="match status" value="1"/>
</dbReference>
<dbReference type="PROSITE" id="PS00360">
    <property type="entry name" value="RIBOSOMAL_S9"/>
    <property type="match status" value="1"/>
</dbReference>
<sequence length="129" mass="14334">MSEQIQSVGRRKEAVCRLYLTPGSGKWLVNGRTLGDYFPRPTLVSAIQQPFTLTDTLGRFDVKATIDGGGVSGQAGAVRLAVARALVQVDETNRKKLREFGLLTRDAREVERKKPGRAGARKRFQFSKR</sequence>
<comment type="similarity">
    <text evidence="1">Belongs to the universal ribosomal protein uS9 family.</text>
</comment>
<gene>
    <name evidence="1" type="primary">rpsI</name>
    <name type="ordered locus">GAU_1777</name>
</gene>
<proteinExistence type="inferred from homology"/>
<name>RS9_GEMAT</name>
<feature type="chain" id="PRO_1000211835" description="Small ribosomal subunit protein uS9">
    <location>
        <begin position="1"/>
        <end position="129"/>
    </location>
</feature>
<accession>C1A3Z4</accession>